<dbReference type="EMBL" id="CP000053">
    <property type="protein sequence ID" value="AAY60944.1"/>
    <property type="molecule type" value="Genomic_DNA"/>
</dbReference>
<dbReference type="SMR" id="Q4UNB4"/>
<dbReference type="STRING" id="315456.RF_0093"/>
<dbReference type="KEGG" id="rfe:RF_0093"/>
<dbReference type="eggNOG" id="COG0419">
    <property type="taxonomic scope" value="Bacteria"/>
</dbReference>
<dbReference type="eggNOG" id="COG3704">
    <property type="taxonomic scope" value="Bacteria"/>
</dbReference>
<dbReference type="HOGENOM" id="CLU_275941_0_0_5"/>
<dbReference type="OrthoDB" id="7163280at2"/>
<dbReference type="Proteomes" id="UP000008548">
    <property type="component" value="Chromosome"/>
</dbReference>
<dbReference type="GO" id="GO:0005886">
    <property type="term" value="C:plasma membrane"/>
    <property type="evidence" value="ECO:0007669"/>
    <property type="project" value="UniProtKB-SubCell"/>
</dbReference>
<dbReference type="GO" id="GO:0030255">
    <property type="term" value="P:protein secretion by the type IV secretion system"/>
    <property type="evidence" value="ECO:0007669"/>
    <property type="project" value="InterPro"/>
</dbReference>
<dbReference type="InterPro" id="IPR007688">
    <property type="entry name" value="Conjugal_tfr_TrbL/VirB6"/>
</dbReference>
<dbReference type="Pfam" id="PF04610">
    <property type="entry name" value="TrbL"/>
    <property type="match status" value="1"/>
</dbReference>
<dbReference type="PROSITE" id="PS51257">
    <property type="entry name" value="PROKAR_LIPOPROTEIN"/>
    <property type="match status" value="1"/>
</dbReference>
<protein>
    <recommendedName>
        <fullName>Uncharacterized lipoprotein RF_0093</fullName>
    </recommendedName>
</protein>
<organism>
    <name type="scientific">Rickettsia felis (strain ATCC VR-1525 / URRWXCal2)</name>
    <name type="common">Rickettsia azadi</name>
    <dbReference type="NCBI Taxonomy" id="315456"/>
    <lineage>
        <taxon>Bacteria</taxon>
        <taxon>Pseudomonadati</taxon>
        <taxon>Pseudomonadota</taxon>
        <taxon>Alphaproteobacteria</taxon>
        <taxon>Rickettsiales</taxon>
        <taxon>Rickettsiaceae</taxon>
        <taxon>Rickettsieae</taxon>
        <taxon>Rickettsia</taxon>
        <taxon>spotted fever group</taxon>
    </lineage>
</organism>
<accession>Q4UNB4</accession>
<proteinExistence type="inferred from homology"/>
<evidence type="ECO:0000255" key="1"/>
<evidence type="ECO:0000255" key="2">
    <source>
        <dbReference type="PROSITE-ProRule" id="PRU00303"/>
    </source>
</evidence>
<evidence type="ECO:0000305" key="3"/>
<keyword id="KW-1003">Cell membrane</keyword>
<keyword id="KW-0449">Lipoprotein</keyword>
<keyword id="KW-0472">Membrane</keyword>
<keyword id="KW-0564">Palmitate</keyword>
<keyword id="KW-0732">Signal</keyword>
<keyword id="KW-0812">Transmembrane</keyword>
<keyword id="KW-1133">Transmembrane helix</keyword>
<feature type="signal peptide" evidence="2">
    <location>
        <begin position="1"/>
        <end position="19"/>
    </location>
</feature>
<feature type="chain" id="PRO_0000269911" description="Uncharacterized lipoprotein RF_0093">
    <location>
        <begin position="20"/>
        <end position="1155"/>
    </location>
</feature>
<feature type="transmembrane region" description="Helical" evidence="1">
    <location>
        <begin position="291"/>
        <end position="311"/>
    </location>
</feature>
<feature type="transmembrane region" description="Helical" evidence="1">
    <location>
        <begin position="395"/>
        <end position="415"/>
    </location>
</feature>
<feature type="transmembrane region" description="Helical" evidence="1">
    <location>
        <begin position="424"/>
        <end position="444"/>
    </location>
</feature>
<feature type="transmembrane region" description="Helical" evidence="1">
    <location>
        <begin position="459"/>
        <end position="479"/>
    </location>
</feature>
<feature type="lipid moiety-binding region" description="N-palmitoyl cysteine" evidence="2">
    <location>
        <position position="20"/>
    </location>
</feature>
<feature type="lipid moiety-binding region" description="S-diacylglycerol cysteine" evidence="2">
    <location>
        <position position="20"/>
    </location>
</feature>
<reference key="1">
    <citation type="journal article" date="2005" name="PLoS Biol.">
        <title>The genome sequence of Rickettsia felis identifies the first putative conjugative plasmid in an obligate intracellular parasite.</title>
        <authorList>
            <person name="Ogata H."/>
            <person name="Renesto P."/>
            <person name="Audic S."/>
            <person name="Robert C."/>
            <person name="Blanc G."/>
            <person name="Fournier P.-E."/>
            <person name="Parinello H."/>
            <person name="Claverie J.-M."/>
            <person name="Raoult D."/>
        </authorList>
    </citation>
    <scope>NUCLEOTIDE SEQUENCE [LARGE SCALE GENOMIC DNA]</scope>
    <source>
        <strain>ATCC VR-1525 / URRWXCal2</strain>
    </source>
</reference>
<sequence>MNKNIFITLLISSLLLLSGCTGDTCIDPDDFGFIKFNVSSRYNPEEITSRQEGDQVAPWRDSAYKVNGYPLTVMVRPWSYILGDKNTSGQLSAWCPWYGQKNNTTTLAAFCVKLQPCTFWDNARLDMCTPNPANQNDAMISNPPCIMTDGVGLYFLIAAKNTDPNISPDSQRKPQGITQHLGELTSSVGYEFYSISSTGQFLPAGGINYQYKGEDKSKYAQSPLYFKIIDKFYDDNSGQYRLVIKSGVTDTRPDPLQFLTDLIKGVLFGKDGIIKKTYQQIIDTPGYRMSVSAILTLYIMFTGFSFLIGNINLTHVELIVRILKVSIVSILLSTDKAWTFFHDYLFVFFIDGVQQILQIINEAAATGPGSQSLLGLLISPQTLSKLFSLLFVDWLGFIYIILYLIALYFIFFLIFKATIIYLTALITIGMIIIMGPIFICFMLFNITRSLFENWLRQLISYALQPIILFAGIAFISMIIRTEIYSTLGFGVCKHDFPNLGPINEIFGSFLEDIDPSLGNSIFYWWFPVPMKGGINNFHKAKILVPEDHIIVDDSCKNDPDKCKHCAAYECIDERYIELPFLDLVKDAKRISNFINGKFVQLDGILLIFVSIYLLSKFNDTAISTAQFIAGTSGNLTDIQKVNQQSYESAAKQMNRPLSYVAKTVSVPVTTRVSAKLEETSMFFAKGFEDIMMGRLEKQALGSSANKAVQNEVKRKYGIDSKDVKMNAITDYENGISGLLKNLPKGNELKAKELSQMKFTQLRDKIAANKYGVKDYAALSEEQKRELDKSLKDANLRELASDANFTKDYQDAYKYAHQEMSGRGVGLFGKNIKPLRSWQEMEHRVDTKRKLKEERRVGIGEKLYAGYTGIKRGALTAIVGKDLRDAYEGNLTSAEWHDFEYNDPRLRTYSEKLKDDEKAREREELQMHINKETLAAQADILSPEYLARLEKAGRQSDVEYYQELAQRKLIHEVRGRLFEEGEPVMMGDRFMREKATDSQMRDMIDNAHRKHAEFIEGDRYTRRQEHYDIMHEKAEGNLEQTYKELKDHFKRDDINIEEMPALIAQKIKDTEQGPEVDAKITEELNNFNADVKNYEYSTEVLNKIEDRKQAITDEVNAQIDQINKYRENAKMEKYVRPIVNEGRKLRKLEDHLRGMK</sequence>
<name>Y093_RICFE</name>
<comment type="subcellular location">
    <subcellularLocation>
        <location evidence="2">Cell membrane</location>
        <topology evidence="3">Multi-pass membrane protein</topology>
    </subcellularLocation>
    <subcellularLocation>
        <location evidence="2">Cell membrane</location>
        <topology evidence="2">Lipid-anchor</topology>
    </subcellularLocation>
</comment>
<comment type="similarity">
    <text evidence="3">Belongs to the TrbL/VirB6 family.</text>
</comment>
<gene>
    <name type="ordered locus">RF_0093</name>
</gene>